<evidence type="ECO:0000250" key="1">
    <source>
        <dbReference type="UniProtKB" id="O14832"/>
    </source>
</evidence>
<evidence type="ECO:0000250" key="2">
    <source>
        <dbReference type="UniProtKB" id="O35386"/>
    </source>
</evidence>
<evidence type="ECO:0000269" key="3">
    <source>
    </source>
</evidence>
<evidence type="ECO:0000269" key="4">
    <source>
    </source>
</evidence>
<evidence type="ECO:0000269" key="5">
    <source>
    </source>
</evidence>
<evidence type="ECO:0000305" key="6"/>
<evidence type="ECO:0000305" key="7">
    <source>
    </source>
</evidence>
<evidence type="ECO:0000305" key="8">
    <source>
    </source>
</evidence>
<feature type="transit peptide" description="Peroxisome" evidence="3 5">
    <location>
        <begin position="1"/>
        <end position="30"/>
    </location>
</feature>
<feature type="chain" id="PRO_0000024055" description="Phytanoyl-CoA dioxygenase, peroxisomal">
    <location>
        <begin position="31"/>
        <end position="338"/>
    </location>
</feature>
<feature type="binding site" evidence="1">
    <location>
        <position position="120"/>
    </location>
    <ligand>
        <name>2-oxoglutarate</name>
        <dbReference type="ChEBI" id="CHEBI:16810"/>
    </ligand>
</feature>
<feature type="binding site" evidence="1">
    <location>
        <position position="157"/>
    </location>
    <ligand>
        <name>2-oxoglutarate</name>
        <dbReference type="ChEBI" id="CHEBI:16810"/>
    </ligand>
</feature>
<feature type="binding site" evidence="1">
    <location>
        <begin position="175"/>
        <end position="177"/>
    </location>
    <ligand>
        <name>2-oxoglutarate</name>
        <dbReference type="ChEBI" id="CHEBI:16810"/>
    </ligand>
</feature>
<feature type="binding site" evidence="1">
    <location>
        <position position="175"/>
    </location>
    <ligand>
        <name>Fe cation</name>
        <dbReference type="ChEBI" id="CHEBI:24875"/>
    </ligand>
</feature>
<feature type="binding site" evidence="1">
    <location>
        <position position="177"/>
    </location>
    <ligand>
        <name>Fe cation</name>
        <dbReference type="ChEBI" id="CHEBI:24875"/>
    </ligand>
</feature>
<feature type="binding site" evidence="1">
    <location>
        <position position="193"/>
    </location>
    <ligand>
        <name>2-oxoglutarate</name>
        <dbReference type="ChEBI" id="CHEBI:16810"/>
    </ligand>
</feature>
<feature type="binding site" evidence="1">
    <location>
        <position position="264"/>
    </location>
    <ligand>
        <name>Fe cation</name>
        <dbReference type="ChEBI" id="CHEBI:24875"/>
    </ligand>
</feature>
<feature type="binding site" evidence="1">
    <location>
        <position position="266"/>
    </location>
    <ligand>
        <name>2-oxoglutarate</name>
        <dbReference type="ChEBI" id="CHEBI:16810"/>
    </ligand>
</feature>
<feature type="binding site" evidence="1">
    <location>
        <position position="275"/>
    </location>
    <ligand>
        <name>2-oxoglutarate</name>
        <dbReference type="ChEBI" id="CHEBI:16810"/>
    </ligand>
</feature>
<feature type="modified residue" description="N6-succinyllysine" evidence="2">
    <location>
        <position position="59"/>
    </location>
</feature>
<feature type="modified residue" description="N6-succinyllysine" evidence="2">
    <location>
        <position position="108"/>
    </location>
</feature>
<feature type="modified residue" description="N6-succinyllysine" evidence="2">
    <location>
        <position position="231"/>
    </location>
</feature>
<feature type="modified residue" description="N6-succinyllysine" evidence="2">
    <location>
        <position position="252"/>
    </location>
</feature>
<feature type="sequence conflict" description="In Ref. 3; AA sequence." evidence="6" ref="3">
    <original>P</original>
    <variation>Q</variation>
    <location>
        <position position="241"/>
    </location>
</feature>
<proteinExistence type="evidence at protein level"/>
<name>PAHX_RAT</name>
<sequence length="338" mass="38588">MDYTRAGARLQVLLGHLGRPSALQIVAHPVSGPASPANFCPEQFQYTLDNNVLSLEQRKFYEENGFLVIKNLVSDDDIQRFRAEFERICRKEVKPPGMTVMKDVAIAKQGYAPSERVVTKIQDFQQNEELFRYCALPQIVKYVECFTGPNIMAMHTMLINKPPDSGKKTSRHPLHQDLHFFPFRPSNLIVCAWTAMEHIDRNNGCLVVLPGTHKGPLKPHDYPKWEGGVNKMYHGIQDYDPDSPRVHLVMEKGDTVFFHPLLIHGSGRNRTQGFRKAISCHYGSSDCKYISVKGTSQENIAREVIEIAEKRYGVQGALDFEDTWKFRCRLVKGERINL</sequence>
<organism>
    <name type="scientific">Rattus norvegicus</name>
    <name type="common">Rat</name>
    <dbReference type="NCBI Taxonomy" id="10116"/>
    <lineage>
        <taxon>Eukaryota</taxon>
        <taxon>Metazoa</taxon>
        <taxon>Chordata</taxon>
        <taxon>Craniata</taxon>
        <taxon>Vertebrata</taxon>
        <taxon>Euteleostomi</taxon>
        <taxon>Mammalia</taxon>
        <taxon>Eutheria</taxon>
        <taxon>Euarchontoglires</taxon>
        <taxon>Glires</taxon>
        <taxon>Rodentia</taxon>
        <taxon>Myomorpha</taxon>
        <taxon>Muroidea</taxon>
        <taxon>Muridae</taxon>
        <taxon>Murinae</taxon>
        <taxon>Rattus</taxon>
    </lineage>
</organism>
<accession>P57093</accession>
<accession>Q9QY64</accession>
<dbReference type="EC" id="1.14.11.18" evidence="3"/>
<dbReference type="EMBL" id="AF121345">
    <property type="protein sequence ID" value="AAF15971.1"/>
    <property type="molecule type" value="mRNA"/>
</dbReference>
<dbReference type="EMBL" id="BC086573">
    <property type="protein sequence ID" value="AAH86573.1"/>
    <property type="molecule type" value="mRNA"/>
</dbReference>
<dbReference type="RefSeq" id="NP_446126.1">
    <property type="nucleotide sequence ID" value="NM_053674.2"/>
</dbReference>
<dbReference type="SMR" id="P57093"/>
<dbReference type="FunCoup" id="P57093">
    <property type="interactions" value="478"/>
</dbReference>
<dbReference type="IntAct" id="P57093">
    <property type="interactions" value="5"/>
</dbReference>
<dbReference type="STRING" id="10116.ENSRNOP00000024362"/>
<dbReference type="iPTMnet" id="P57093"/>
<dbReference type="PhosphoSitePlus" id="P57093"/>
<dbReference type="PaxDb" id="10116-ENSRNOP00000024362"/>
<dbReference type="ABCD" id="P57093">
    <property type="antibodies" value="1 sequenced antibody"/>
</dbReference>
<dbReference type="Ensembl" id="ENSRNOT00000024362.7">
    <property type="protein sequence ID" value="ENSRNOP00000024362.3"/>
    <property type="gene ID" value="ENSRNOG00000018044.7"/>
</dbReference>
<dbReference type="GeneID" id="114209"/>
<dbReference type="KEGG" id="rno:114209"/>
<dbReference type="AGR" id="RGD:620317"/>
<dbReference type="CTD" id="5264"/>
<dbReference type="RGD" id="620317">
    <property type="gene designation" value="Phyh"/>
</dbReference>
<dbReference type="eggNOG" id="KOG3290">
    <property type="taxonomic scope" value="Eukaryota"/>
</dbReference>
<dbReference type="GeneTree" id="ENSGT00390000001775"/>
<dbReference type="HOGENOM" id="CLU_060877_0_0_1"/>
<dbReference type="InParanoid" id="P57093"/>
<dbReference type="OMA" id="CCAWTAM"/>
<dbReference type="OrthoDB" id="2328924at2759"/>
<dbReference type="PhylomeDB" id="P57093"/>
<dbReference type="TreeFam" id="TF313667"/>
<dbReference type="BioCyc" id="MetaCyc:MONOMER-17703"/>
<dbReference type="Reactome" id="R-RNO-389599">
    <property type="pathway name" value="Alpha-oxidation of phytanate"/>
</dbReference>
<dbReference type="Reactome" id="R-RNO-9033241">
    <property type="pathway name" value="Peroxisomal protein import"/>
</dbReference>
<dbReference type="UniPathway" id="UPA00199"/>
<dbReference type="PRO" id="PR:P57093"/>
<dbReference type="Proteomes" id="UP000002494">
    <property type="component" value="Chromosome 17"/>
</dbReference>
<dbReference type="Bgee" id="ENSRNOG00000018044">
    <property type="expression patterns" value="Expressed in heart and 19 other cell types or tissues"/>
</dbReference>
<dbReference type="GO" id="GO:0097731">
    <property type="term" value="C:9+0 non-motile cilium"/>
    <property type="evidence" value="ECO:0000266"/>
    <property type="project" value="RGD"/>
</dbReference>
<dbReference type="GO" id="GO:0005777">
    <property type="term" value="C:peroxisome"/>
    <property type="evidence" value="ECO:0000314"/>
    <property type="project" value="HGNC-UCL"/>
</dbReference>
<dbReference type="GO" id="GO:0031406">
    <property type="term" value="F:carboxylic acid binding"/>
    <property type="evidence" value="ECO:0000266"/>
    <property type="project" value="RGD"/>
</dbReference>
<dbReference type="GO" id="GO:0003824">
    <property type="term" value="F:catalytic activity"/>
    <property type="evidence" value="ECO:0000266"/>
    <property type="project" value="RGD"/>
</dbReference>
<dbReference type="GO" id="GO:0008198">
    <property type="term" value="F:ferrous iron binding"/>
    <property type="evidence" value="ECO:0000266"/>
    <property type="project" value="RGD"/>
</dbReference>
<dbReference type="GO" id="GO:0031418">
    <property type="term" value="F:L-ascorbic acid binding"/>
    <property type="evidence" value="ECO:0000266"/>
    <property type="project" value="RGD"/>
</dbReference>
<dbReference type="GO" id="GO:0048244">
    <property type="term" value="F:phytanoyl-CoA dioxygenase activity"/>
    <property type="evidence" value="ECO:0000314"/>
    <property type="project" value="RGD"/>
</dbReference>
<dbReference type="GO" id="GO:0019606">
    <property type="term" value="P:2-oxobutyrate catabolic process"/>
    <property type="evidence" value="ECO:0000314"/>
    <property type="project" value="RGD"/>
</dbReference>
<dbReference type="GO" id="GO:0006103">
    <property type="term" value="P:2-oxoglutarate metabolic process"/>
    <property type="evidence" value="ECO:0000266"/>
    <property type="project" value="RGD"/>
</dbReference>
<dbReference type="GO" id="GO:0001561">
    <property type="term" value="P:fatty acid alpha-oxidation"/>
    <property type="evidence" value="ECO:0000314"/>
    <property type="project" value="RGD"/>
</dbReference>
<dbReference type="GO" id="GO:0006720">
    <property type="term" value="P:isoprenoid metabolic process"/>
    <property type="evidence" value="ECO:0000266"/>
    <property type="project" value="RGD"/>
</dbReference>
<dbReference type="GO" id="GO:0097089">
    <property type="term" value="P:methyl-branched fatty acid metabolic process"/>
    <property type="evidence" value="ECO:0000266"/>
    <property type="project" value="RGD"/>
</dbReference>
<dbReference type="FunFam" id="2.60.120.620:FF:000012">
    <property type="entry name" value="Phytanoyl-CoA dioxygenase, peroxisomal"/>
    <property type="match status" value="1"/>
</dbReference>
<dbReference type="Gene3D" id="2.60.120.620">
    <property type="entry name" value="q2cbj1_9rhob like domain"/>
    <property type="match status" value="1"/>
</dbReference>
<dbReference type="InterPro" id="IPR047128">
    <property type="entry name" value="PhyH"/>
</dbReference>
<dbReference type="InterPro" id="IPR008775">
    <property type="entry name" value="Phytyl_CoA_dOase-like"/>
</dbReference>
<dbReference type="PANTHER" id="PTHR21308">
    <property type="entry name" value="PHYTANOYL-COA ALPHA-HYDROXYLASE"/>
    <property type="match status" value="1"/>
</dbReference>
<dbReference type="PANTHER" id="PTHR21308:SF1">
    <property type="entry name" value="PHYTANOYL-COA DIOXYGENASE, PEROXISOMAL"/>
    <property type="match status" value="1"/>
</dbReference>
<dbReference type="Pfam" id="PF05721">
    <property type="entry name" value="PhyH"/>
    <property type="match status" value="1"/>
</dbReference>
<dbReference type="SUPFAM" id="SSF51197">
    <property type="entry name" value="Clavaminate synthase-like"/>
    <property type="match status" value="1"/>
</dbReference>
<protein>
    <recommendedName>
        <fullName>Phytanoyl-CoA dioxygenase, peroxisomal</fullName>
        <ecNumber evidence="3">1.14.11.18</ecNumber>
    </recommendedName>
    <alternativeName>
        <fullName>Phytanic acid oxidase</fullName>
    </alternativeName>
    <alternativeName>
        <fullName>Phytanoyl-CoA alpha-hydroxylase</fullName>
        <shortName>PhyH</shortName>
    </alternativeName>
</protein>
<keyword id="KW-0223">Dioxygenase</keyword>
<keyword id="KW-0903">Direct protein sequencing</keyword>
<keyword id="KW-0408">Iron</keyword>
<keyword id="KW-0479">Metal-binding</keyword>
<keyword id="KW-0560">Oxidoreductase</keyword>
<keyword id="KW-0576">Peroxisome</keyword>
<keyword id="KW-1185">Reference proteome</keyword>
<keyword id="KW-0809">Transit peptide</keyword>
<keyword id="KW-0847">Vitamin C</keyword>
<comment type="function">
    <text evidence="1 3 4">Catalyzes the 2-hydroxylation of racemic phytanoyl-CoA and the isomers of 3-methylhexadecanoyl-CoA (PubMed:10588950, PubMed:10744784). Shows activity also towards a variety of other mono-branched 3-methylacyl-CoA esters (with a chain length of at least seven carbon atoms) and straight-chain acyl-CoA esters (with a chain length longer than four carbon atoms) (By similarity). Does not hydroxylate long and very long straight chain acyl-CoAs or 2-methyl-and 4-methyl-branched acyl-CoAs (By similarity).</text>
</comment>
<comment type="catalytic activity">
    <reaction evidence="3">
        <text>phytanoyl-CoA + 2-oxoglutarate + O2 = 2-hydroxyphytanoyl-CoA + succinate + CO2</text>
        <dbReference type="Rhea" id="RHEA:16065"/>
        <dbReference type="ChEBI" id="CHEBI:15379"/>
        <dbReference type="ChEBI" id="CHEBI:16526"/>
        <dbReference type="ChEBI" id="CHEBI:16810"/>
        <dbReference type="ChEBI" id="CHEBI:30031"/>
        <dbReference type="ChEBI" id="CHEBI:57334"/>
        <dbReference type="ChEBI" id="CHEBI:57391"/>
        <dbReference type="EC" id="1.14.11.18"/>
    </reaction>
    <physiologicalReaction direction="left-to-right" evidence="7">
        <dbReference type="Rhea" id="RHEA:16066"/>
    </physiologicalReaction>
</comment>
<comment type="catalytic activity">
    <reaction evidence="4">
        <text>3-methylhexadecanoyl-CoA + 2-oxoglutarate + O2 = 2-hydroxy-3-methylhexadecanoyl-CoA + succinate + CO2</text>
        <dbReference type="Rhea" id="RHEA:44000"/>
        <dbReference type="ChEBI" id="CHEBI:15379"/>
        <dbReference type="ChEBI" id="CHEBI:16526"/>
        <dbReference type="ChEBI" id="CHEBI:16810"/>
        <dbReference type="ChEBI" id="CHEBI:30031"/>
        <dbReference type="ChEBI" id="CHEBI:58784"/>
        <dbReference type="ChEBI" id="CHEBI:83969"/>
    </reaction>
    <physiologicalReaction direction="left-to-right" evidence="8">
        <dbReference type="Rhea" id="RHEA:44001"/>
    </physiologicalReaction>
</comment>
<comment type="catalytic activity">
    <reaction evidence="1">
        <text>hexadecanoyl-CoA + 2-oxoglutarate + O2 = 2-hydroxyhexadecanoyl-CoA + succinate + CO2</text>
        <dbReference type="Rhea" id="RHEA:54596"/>
        <dbReference type="ChEBI" id="CHEBI:15379"/>
        <dbReference type="ChEBI" id="CHEBI:16526"/>
        <dbReference type="ChEBI" id="CHEBI:16810"/>
        <dbReference type="ChEBI" id="CHEBI:30031"/>
        <dbReference type="ChEBI" id="CHEBI:57379"/>
        <dbReference type="ChEBI" id="CHEBI:74115"/>
    </reaction>
    <physiologicalReaction direction="left-to-right" evidence="1">
        <dbReference type="Rhea" id="RHEA:54597"/>
    </physiologicalReaction>
</comment>
<comment type="catalytic activity">
    <reaction evidence="1">
        <text>octanoyl-CoA + 2-oxoglutarate + O2 = 2-hydroxyoctanoyl-CoA + succinate + CO2</text>
        <dbReference type="Rhea" id="RHEA:54600"/>
        <dbReference type="ChEBI" id="CHEBI:15379"/>
        <dbReference type="ChEBI" id="CHEBI:16526"/>
        <dbReference type="ChEBI" id="CHEBI:16810"/>
        <dbReference type="ChEBI" id="CHEBI:30031"/>
        <dbReference type="ChEBI" id="CHEBI:57386"/>
        <dbReference type="ChEBI" id="CHEBI:138290"/>
    </reaction>
    <physiologicalReaction direction="left-to-right" evidence="1">
        <dbReference type="Rhea" id="RHEA:54601"/>
    </physiologicalReaction>
</comment>
<comment type="catalytic activity">
    <reaction evidence="1">
        <text>decanoyl-CoA + 2-oxoglutarate + O2 = 2-hydroxydecanoyl-CoA + succinate + CO2</text>
        <dbReference type="Rhea" id="RHEA:54604"/>
        <dbReference type="ChEBI" id="CHEBI:15379"/>
        <dbReference type="ChEBI" id="CHEBI:16526"/>
        <dbReference type="ChEBI" id="CHEBI:16810"/>
        <dbReference type="ChEBI" id="CHEBI:30031"/>
        <dbReference type="ChEBI" id="CHEBI:61430"/>
        <dbReference type="ChEBI" id="CHEBI:138292"/>
    </reaction>
    <physiologicalReaction direction="left-to-right" evidence="1">
        <dbReference type="Rhea" id="RHEA:54605"/>
    </physiologicalReaction>
</comment>
<comment type="catalytic activity">
    <reaction evidence="1">
        <text>3-methylbutanoyl-CoA + 2-oxoglutarate + O2 = 2-hydroxy-3-methylbutanoyl-CoA + succinate + CO2</text>
        <dbReference type="Rhea" id="RHEA:54612"/>
        <dbReference type="ChEBI" id="CHEBI:15379"/>
        <dbReference type="ChEBI" id="CHEBI:16526"/>
        <dbReference type="ChEBI" id="CHEBI:16810"/>
        <dbReference type="ChEBI" id="CHEBI:30031"/>
        <dbReference type="ChEBI" id="CHEBI:57345"/>
        <dbReference type="ChEBI" id="CHEBI:138296"/>
    </reaction>
    <physiologicalReaction direction="left-to-right" evidence="1">
        <dbReference type="Rhea" id="RHEA:54613"/>
    </physiologicalReaction>
</comment>
<comment type="catalytic activity">
    <reaction evidence="1">
        <text>heptadecanoyl-CoA + 2-oxoglutarate + O2 = 2-hydroxyheptadecanoyl-CoA + succinate + CO2</text>
        <dbReference type="Rhea" id="RHEA:54616"/>
        <dbReference type="ChEBI" id="CHEBI:15379"/>
        <dbReference type="ChEBI" id="CHEBI:16526"/>
        <dbReference type="ChEBI" id="CHEBI:16810"/>
        <dbReference type="ChEBI" id="CHEBI:30031"/>
        <dbReference type="ChEBI" id="CHEBI:74307"/>
        <dbReference type="ChEBI" id="CHEBI:138297"/>
    </reaction>
    <physiologicalReaction direction="left-to-right" evidence="1">
        <dbReference type="Rhea" id="RHEA:54617"/>
    </physiologicalReaction>
</comment>
<comment type="catalytic activity">
    <reaction evidence="1">
        <text>eicosanoyl-CoA + 2-oxoglutarate + O2 = 2-hydroxyeicosanoyl-CoA + succinate + CO2</text>
        <dbReference type="Rhea" id="RHEA:54620"/>
        <dbReference type="ChEBI" id="CHEBI:15379"/>
        <dbReference type="ChEBI" id="CHEBI:16526"/>
        <dbReference type="ChEBI" id="CHEBI:16810"/>
        <dbReference type="ChEBI" id="CHEBI:30031"/>
        <dbReference type="ChEBI" id="CHEBI:57380"/>
        <dbReference type="ChEBI" id="CHEBI:138298"/>
    </reaction>
    <physiologicalReaction direction="left-to-right" evidence="1">
        <dbReference type="Rhea" id="RHEA:54621"/>
    </physiologicalReaction>
</comment>
<comment type="catalytic activity">
    <reaction evidence="1">
        <text>octadecanoyl-CoA + 2-oxoglutarate + O2 = 2-hydroxyoctadecanoyl-CoA + succinate + CO2</text>
        <dbReference type="Rhea" id="RHEA:54624"/>
        <dbReference type="ChEBI" id="CHEBI:15379"/>
        <dbReference type="ChEBI" id="CHEBI:16526"/>
        <dbReference type="ChEBI" id="CHEBI:16810"/>
        <dbReference type="ChEBI" id="CHEBI:30031"/>
        <dbReference type="ChEBI" id="CHEBI:57394"/>
        <dbReference type="ChEBI" id="CHEBI:74116"/>
    </reaction>
    <physiologicalReaction direction="left-to-right" evidence="1">
        <dbReference type="Rhea" id="RHEA:54625"/>
    </physiologicalReaction>
</comment>
<comment type="catalytic activity">
    <reaction evidence="1">
        <text>dodecanoyl-CoA + 2-oxoglutarate + O2 = 2-hydroxydodecanoyl-CoA + succinate + CO2</text>
        <dbReference type="Rhea" id="RHEA:54628"/>
        <dbReference type="ChEBI" id="CHEBI:15379"/>
        <dbReference type="ChEBI" id="CHEBI:16526"/>
        <dbReference type="ChEBI" id="CHEBI:16810"/>
        <dbReference type="ChEBI" id="CHEBI:30031"/>
        <dbReference type="ChEBI" id="CHEBI:57375"/>
        <dbReference type="ChEBI" id="CHEBI:138299"/>
    </reaction>
    <physiologicalReaction direction="left-to-right" evidence="1">
        <dbReference type="Rhea" id="RHEA:54629"/>
    </physiologicalReaction>
</comment>
<comment type="catalytic activity">
    <reaction evidence="1">
        <text>tetradecanoyl-CoA + 2-oxoglutarate + O2 = 2-hydroxytetradecanoyl-CoA + succinate + CO2</text>
        <dbReference type="Rhea" id="RHEA:54632"/>
        <dbReference type="ChEBI" id="CHEBI:15379"/>
        <dbReference type="ChEBI" id="CHEBI:16526"/>
        <dbReference type="ChEBI" id="CHEBI:16810"/>
        <dbReference type="ChEBI" id="CHEBI:30031"/>
        <dbReference type="ChEBI" id="CHEBI:57385"/>
        <dbReference type="ChEBI" id="CHEBI:138300"/>
    </reaction>
    <physiologicalReaction direction="left-to-right" evidence="1">
        <dbReference type="Rhea" id="RHEA:54633"/>
    </physiologicalReaction>
</comment>
<comment type="catalytic activity">
    <reaction evidence="1">
        <text>hexanoyl-CoA + 2-oxoglutarate + O2 = 2-hydroxyhexanoyl-CoA + succinate + CO2</text>
        <dbReference type="Rhea" id="RHEA:55172"/>
        <dbReference type="ChEBI" id="CHEBI:15379"/>
        <dbReference type="ChEBI" id="CHEBI:16526"/>
        <dbReference type="ChEBI" id="CHEBI:16810"/>
        <dbReference type="ChEBI" id="CHEBI:30031"/>
        <dbReference type="ChEBI" id="CHEBI:62620"/>
        <dbReference type="ChEBI" id="CHEBI:138630"/>
    </reaction>
    <physiologicalReaction direction="left-to-right" evidence="1">
        <dbReference type="Rhea" id="RHEA:55173"/>
    </physiologicalReaction>
</comment>
<comment type="catalytic activity">
    <reaction evidence="1">
        <text>butanoyl-CoA + 2-oxoglutarate + O2 = 2-hydroxybutanoyl-CoA + succinate + CO2</text>
        <dbReference type="Rhea" id="RHEA:55176"/>
        <dbReference type="ChEBI" id="CHEBI:15379"/>
        <dbReference type="ChEBI" id="CHEBI:16526"/>
        <dbReference type="ChEBI" id="CHEBI:16810"/>
        <dbReference type="ChEBI" id="CHEBI:30031"/>
        <dbReference type="ChEBI" id="CHEBI:57371"/>
        <dbReference type="ChEBI" id="CHEBI:138628"/>
    </reaction>
    <physiologicalReaction direction="left-to-right" evidence="1">
        <dbReference type="Rhea" id="RHEA:55177"/>
    </physiologicalReaction>
</comment>
<comment type="catalytic activity">
    <reaction evidence="1">
        <text>3-methylnonanoyl-CoA + 2-oxoglutarate + O2 = 2-hydroxy-3-methylnonanoyl-CoA + succinate + CO2</text>
        <dbReference type="Rhea" id="RHEA:55180"/>
        <dbReference type="ChEBI" id="CHEBI:15379"/>
        <dbReference type="ChEBI" id="CHEBI:16526"/>
        <dbReference type="ChEBI" id="CHEBI:16810"/>
        <dbReference type="ChEBI" id="CHEBI:30031"/>
        <dbReference type="ChEBI" id="CHEBI:138633"/>
        <dbReference type="ChEBI" id="CHEBI:138634"/>
    </reaction>
    <physiologicalReaction direction="left-to-right" evidence="1">
        <dbReference type="Rhea" id="RHEA:55181"/>
    </physiologicalReaction>
</comment>
<comment type="catalytic activity">
    <reaction evidence="1">
        <text>3-methylundecanoyl-CoA + 2-oxoglutarate + O2 = 2-hydroxy-3-methylundecanoyl-CoA + succinate + CO2</text>
        <dbReference type="Rhea" id="RHEA:55184"/>
        <dbReference type="ChEBI" id="CHEBI:15379"/>
        <dbReference type="ChEBI" id="CHEBI:16526"/>
        <dbReference type="ChEBI" id="CHEBI:16810"/>
        <dbReference type="ChEBI" id="CHEBI:30031"/>
        <dbReference type="ChEBI" id="CHEBI:84183"/>
        <dbReference type="ChEBI" id="CHEBI:138632"/>
    </reaction>
    <physiologicalReaction direction="left-to-right" evidence="1">
        <dbReference type="Rhea" id="RHEA:55185"/>
    </physiologicalReaction>
</comment>
<comment type="catalytic activity">
    <reaction evidence="1">
        <text>3-methyldodecanoyl-CoA + 2-oxoglutarate + O2 = 2-hydroxy-3-methyldodecanoyl-CoA + succinate + CO2</text>
        <dbReference type="Rhea" id="RHEA:55192"/>
        <dbReference type="ChEBI" id="CHEBI:15379"/>
        <dbReference type="ChEBI" id="CHEBI:16526"/>
        <dbReference type="ChEBI" id="CHEBI:16810"/>
        <dbReference type="ChEBI" id="CHEBI:30031"/>
        <dbReference type="ChEBI" id="CHEBI:138636"/>
        <dbReference type="ChEBI" id="CHEBI:138637"/>
    </reaction>
    <physiologicalReaction direction="left-to-right" evidence="1">
        <dbReference type="Rhea" id="RHEA:55193"/>
    </physiologicalReaction>
</comment>
<comment type="cofactor">
    <cofactor evidence="3 4">
        <name>Fe cation</name>
        <dbReference type="ChEBI" id="CHEBI:24875"/>
    </cofactor>
</comment>
<comment type="cofactor">
    <cofactor evidence="3 4">
        <name>L-ascorbate</name>
        <dbReference type="ChEBI" id="CHEBI:38290"/>
    </cofactor>
</comment>
<comment type="cofactor">
    <cofactor evidence="4">
        <name>ATP</name>
        <dbReference type="ChEBI" id="CHEBI:30616"/>
    </cofactor>
</comment>
<comment type="cofactor">
    <cofactor evidence="4">
        <name>Mg(2+)</name>
        <dbReference type="ChEBI" id="CHEBI:18420"/>
    </cofactor>
</comment>
<comment type="biophysicochemical properties">
    <phDependence>
        <text evidence="3">Optimum pH is 7.5.</text>
    </phDependence>
</comment>
<comment type="pathway">
    <text>Lipid metabolism; fatty acid metabolism.</text>
</comment>
<comment type="subunit">
    <text evidence="1">Interacts specifically with FKBP52 and PHYHIP.</text>
</comment>
<comment type="subcellular location">
    <subcellularLocation>
        <location evidence="3">Peroxisome</location>
    </subcellularLocation>
</comment>
<comment type="similarity">
    <text evidence="6">Belongs to the PhyH family.</text>
</comment>
<reference key="1">
    <citation type="journal article" date="1999" name="J. Lipid Res.">
        <title>Phytanoyl-CoA hydroxylase from rat liver: protein purification and cDNA cloning with implications for the subcellular localization of phytanic acid alpha-oxidation.</title>
        <authorList>
            <person name="Jansen G.A."/>
            <person name="Ofman R."/>
            <person name="Denis S."/>
            <person name="Ferdinandusse S."/>
            <person name="Hogenhout E.M."/>
            <person name="Jakobs C."/>
            <person name="Wanders R.J.A."/>
        </authorList>
    </citation>
    <scope>NUCLEOTIDE SEQUENCE [MRNA]</scope>
    <scope>PROTEIN SEQUENCE OF 31-50</scope>
    <scope>FUNCTION</scope>
    <scope>CATALYTIC ACTIVITY</scope>
    <scope>COFACTOR</scope>
    <scope>SUBCELLULAR LOCATION</scope>
    <scope>BIOPHYSICOCHEMICAL PROPERTIES</scope>
    <source>
        <strain>Wistar</strain>
        <tissue>Liver</tissue>
    </source>
</reference>
<reference key="2">
    <citation type="journal article" date="2004" name="Genome Res.">
        <title>The status, quality, and expansion of the NIH full-length cDNA project: the Mammalian Gene Collection (MGC).</title>
        <authorList>
            <consortium name="The MGC Project Team"/>
        </authorList>
    </citation>
    <scope>NUCLEOTIDE SEQUENCE [LARGE SCALE MRNA]</scope>
    <source>
        <tissue>Ovary</tissue>
    </source>
</reference>
<reference key="3">
    <citation type="journal article" date="1997" name="Nat. Genet.">
        <title>Refsum disease is caused by mutations in the phytanoyl-CoA hydroxylase gene.</title>
        <authorList>
            <person name="Jansen G.A."/>
            <person name="Ofman R."/>
            <person name="Ferdinandusse S."/>
            <person name="Ijlst L."/>
            <person name="Muijsers A.O."/>
            <person name="Skjeldal O.H."/>
            <person name="Stokke O."/>
            <person name="Jakobs C."/>
            <person name="Besley G.T.N."/>
            <person name="Wraith J.E."/>
            <person name="Wanders R.J.A."/>
        </authorList>
    </citation>
    <scope>PROTEIN SEQUENCE OF 31-50 AND 232-241</scope>
</reference>
<reference key="4">
    <citation type="journal article" date="2000" name="J. Lipid Res.">
        <title>Phytanoyl-CoA hydroxylase: recognition of 3-methyl-branched acyl-coAs and requirement for GTP or ATP and Mg(2+) in addition to its known hydroxylation cofactors.</title>
        <authorList>
            <person name="Croes K."/>
            <person name="Foulon V."/>
            <person name="Casteels M."/>
            <person name="Van Veldhoven P.P."/>
            <person name="Mannaerts G.P."/>
        </authorList>
    </citation>
    <scope>FUNCTION</scope>
    <scope>CATALYTIC ACTIVITY</scope>
    <scope>COFACTOR</scope>
</reference>
<gene>
    <name type="primary">Phyh</name>
</gene>